<accession>P10897</accession>
<accession>Q0P5F5</accession>
<feature type="chain" id="PRO_0000151026" description="Transmembrane ascorbate-dependent reductase CYB561">
    <location>
        <begin position="1"/>
        <end position="252"/>
    </location>
</feature>
<feature type="topological domain" description="Cytoplasmic" evidence="1">
    <location>
        <begin position="1"/>
        <end position="17"/>
    </location>
</feature>
<feature type="transmembrane region" description="Helical" evidence="3">
    <location>
        <begin position="18"/>
        <end position="38"/>
    </location>
</feature>
<feature type="topological domain" description="Vesicular" evidence="1">
    <location>
        <begin position="39"/>
        <end position="52"/>
    </location>
</feature>
<feature type="transmembrane region" description="Helical" evidence="3">
    <location>
        <begin position="53"/>
        <end position="73"/>
    </location>
</feature>
<feature type="topological domain" description="Cytoplasmic" evidence="1">
    <location>
        <begin position="74"/>
        <end position="86"/>
    </location>
</feature>
<feature type="transmembrane region" description="Helical" evidence="3">
    <location>
        <begin position="87"/>
        <end position="107"/>
    </location>
</feature>
<feature type="topological domain" description="Vesicular" evidence="1">
    <location>
        <begin position="108"/>
        <end position="125"/>
    </location>
</feature>
<feature type="transmembrane region" description="Helical" evidence="3">
    <location>
        <begin position="126"/>
        <end position="146"/>
    </location>
</feature>
<feature type="topological domain" description="Cytoplasmic" evidence="1">
    <location>
        <begin position="147"/>
        <end position="159"/>
    </location>
</feature>
<feature type="transmembrane region" description="Helical" evidence="3">
    <location>
        <begin position="160"/>
        <end position="180"/>
    </location>
</feature>
<feature type="topological domain" description="Vesicular" evidence="1">
    <location>
        <begin position="181"/>
        <end position="199"/>
    </location>
</feature>
<feature type="transmembrane region" description="Helical" evidence="3">
    <location>
        <begin position="200"/>
        <end position="220"/>
    </location>
</feature>
<feature type="topological domain" description="Cytoplasmic" evidence="1">
    <location>
        <begin position="221"/>
        <end position="252"/>
    </location>
</feature>
<feature type="domain" description="Cytochrome b561" evidence="4">
    <location>
        <begin position="20"/>
        <end position="221"/>
    </location>
</feature>
<feature type="binding site" description="axial binding residue" evidence="1">
    <location>
        <position position="54"/>
    </location>
    <ligand>
        <name>heme b</name>
        <dbReference type="ChEBI" id="CHEBI:60344"/>
        <label>1</label>
    </ligand>
    <ligandPart>
        <name>Fe</name>
        <dbReference type="ChEBI" id="CHEBI:18248"/>
    </ligandPart>
</feature>
<feature type="binding site" evidence="1">
    <location>
        <position position="74"/>
    </location>
    <ligand>
        <name>heme b</name>
        <dbReference type="ChEBI" id="CHEBI:60344"/>
        <label>2</label>
    </ligand>
</feature>
<feature type="binding site" evidence="1">
    <location>
        <position position="81"/>
    </location>
    <ligand>
        <name>heme b</name>
        <dbReference type="ChEBI" id="CHEBI:60344"/>
        <label>2</label>
    </ligand>
</feature>
<feature type="binding site" evidence="1">
    <location>
        <position position="81"/>
    </location>
    <ligand>
        <name>L-ascorbate</name>
        <dbReference type="ChEBI" id="CHEBI:38290"/>
    </ligand>
</feature>
<feature type="binding site" evidence="1">
    <location>
        <position position="85"/>
    </location>
    <ligand>
        <name>L-ascorbate</name>
        <dbReference type="ChEBI" id="CHEBI:38290"/>
    </ligand>
</feature>
<feature type="binding site" description="axial binding residue" evidence="1">
    <location>
        <position position="88"/>
    </location>
    <ligand>
        <name>heme b</name>
        <dbReference type="ChEBI" id="CHEBI:60344"/>
        <label>2</label>
    </ligand>
    <ligandPart>
        <name>Fe</name>
        <dbReference type="ChEBI" id="CHEBI:18248"/>
    </ligandPart>
</feature>
<feature type="binding site" evidence="1">
    <location>
        <begin position="117"/>
        <end position="120"/>
    </location>
    <ligand>
        <name>heme b</name>
        <dbReference type="ChEBI" id="CHEBI:60344"/>
        <label>1</label>
    </ligand>
</feature>
<feature type="binding site" description="axial binding residue" evidence="1">
    <location>
        <position position="122"/>
    </location>
    <ligand>
        <name>heme b</name>
        <dbReference type="ChEBI" id="CHEBI:60344"/>
        <label>1</label>
    </ligand>
    <ligandPart>
        <name>Fe</name>
        <dbReference type="ChEBI" id="CHEBI:18248"/>
    </ligandPart>
</feature>
<feature type="binding site" evidence="1">
    <location>
        <position position="154"/>
    </location>
    <ligand>
        <name>L-ascorbate</name>
        <dbReference type="ChEBI" id="CHEBI:38290"/>
    </ligand>
</feature>
<feature type="binding site" description="axial binding residue" evidence="1">
    <location>
        <position position="161"/>
    </location>
    <ligand>
        <name>heme b</name>
        <dbReference type="ChEBI" id="CHEBI:60344"/>
        <label>2</label>
    </ligand>
    <ligandPart>
        <name>Fe</name>
        <dbReference type="ChEBI" id="CHEBI:18248"/>
    </ligandPart>
</feature>
<feature type="binding site" evidence="1">
    <location>
        <position position="182"/>
    </location>
    <ligand>
        <name>heme b</name>
        <dbReference type="ChEBI" id="CHEBI:60344"/>
        <label>1</label>
    </ligand>
</feature>
<feature type="binding site" evidence="1">
    <location>
        <position position="226"/>
    </location>
    <ligand>
        <name>heme b</name>
        <dbReference type="ChEBI" id="CHEBI:60344"/>
        <label>2</label>
    </ligand>
</feature>
<feature type="modified residue" description="N-acetylmethionine" evidence="5">
    <location>
        <position position="1"/>
    </location>
</feature>
<feature type="modified residue" description="Phosphoserine" evidence="2">
    <location>
        <position position="248"/>
    </location>
</feature>
<feature type="modified residue" description="Phosphoserine" evidence="2">
    <location>
        <position position="250"/>
    </location>
</feature>
<feature type="mutagenesis site" description="Decreased protein expression." evidence="7">
    <original>H</original>
    <variation>Q</variation>
    <location>
        <position position="54"/>
    </location>
</feature>
<feature type="mutagenesis site" description="No effect on heme b binding." evidence="7">
    <original>N</original>
    <variation>K</variation>
    <location>
        <position position="78"/>
    </location>
</feature>
<feature type="mutagenesis site" description="Decreased protein expression. Decreased heme b binding. Loss of oxidoreductase activity." evidence="7">
    <original>H</original>
    <variation>Q</variation>
    <location>
        <position position="88"/>
    </location>
</feature>
<feature type="mutagenesis site" description="Decreased heme b binding. Loss of oxidoreductase activity." evidence="7">
    <original>H</original>
    <variation>Y</variation>
    <location>
        <position position="88"/>
    </location>
</feature>
<feature type="mutagenesis site" description="No effect on heme b binding. Decreased oxidoreductase activity." evidence="7">
    <original>H</original>
    <variation>Q</variation>
    <location>
        <position position="92"/>
    </location>
</feature>
<feature type="mutagenesis site" description="No effect on heme b binding." evidence="7">
    <original>H</original>
    <variation>Y</variation>
    <location>
        <position position="92"/>
    </location>
</feature>
<feature type="mutagenesis site" description="No effect on heme b binding." evidence="7">
    <original>H</original>
    <variation>Y</variation>
    <location>
        <position position="109"/>
    </location>
</feature>
<feature type="mutagenesis site" description="No effect on heme b binding." evidence="7">
    <original>H</original>
    <variation>Q</variation>
    <location>
        <position position="110"/>
    </location>
</feature>
<feature type="mutagenesis site" description="No effect on heme b binding." evidence="7">
    <original>H</original>
    <variation>Y</variation>
    <location>
        <position position="110"/>
    </location>
</feature>
<feature type="mutagenesis site" description="Decreased protein expression." evidence="7">
    <original>H</original>
    <variation>Q</variation>
    <location>
        <position position="122"/>
    </location>
</feature>
<feature type="mutagenesis site" description="Decreased protein expression. Decreased heme b binding. Loss of transmembrane oxidoreductase activity." evidence="7">
    <original>H</original>
    <variation>Q</variation>
    <location>
        <position position="161"/>
    </location>
</feature>
<feature type="mutagenesis site" description="Decreased heme b binding. Loss of oxidoreductase activity." evidence="7">
    <original>H</original>
    <variation>Y</variation>
    <location>
        <position position="161"/>
    </location>
</feature>
<keyword id="KW-0007">Acetylation</keyword>
<keyword id="KW-0968">Cytoplasmic vesicle</keyword>
<keyword id="KW-0903">Direct protein sequencing</keyword>
<keyword id="KW-0249">Electron transport</keyword>
<keyword id="KW-0349">Heme</keyword>
<keyword id="KW-0408">Iron</keyword>
<keyword id="KW-0472">Membrane</keyword>
<keyword id="KW-0479">Metal-binding</keyword>
<keyword id="KW-0597">Phosphoprotein</keyword>
<keyword id="KW-1185">Reference proteome</keyword>
<keyword id="KW-1278">Translocase</keyword>
<keyword id="KW-0812">Transmembrane</keyword>
<keyword id="KW-1133">Transmembrane helix</keyword>
<keyword id="KW-0813">Transport</keyword>
<dbReference type="EC" id="7.2.1.-" evidence="6 9"/>
<dbReference type="EMBL" id="X12783">
    <property type="protein sequence ID" value="CAA31274.1"/>
    <property type="status" value="ALT_INIT"/>
    <property type="molecule type" value="mRNA"/>
</dbReference>
<dbReference type="EMBL" id="BC120119">
    <property type="protein sequence ID" value="AAI20120.1"/>
    <property type="molecule type" value="mRNA"/>
</dbReference>
<dbReference type="PIR" id="S01167">
    <property type="entry name" value="S01167"/>
</dbReference>
<dbReference type="RefSeq" id="NP_777262.1">
    <property type="nucleotide sequence ID" value="NM_174837.2"/>
</dbReference>
<dbReference type="RefSeq" id="XP_005220876.1">
    <property type="nucleotide sequence ID" value="XM_005220819.4"/>
</dbReference>
<dbReference type="RefSeq" id="XP_005220878.1">
    <property type="nucleotide sequence ID" value="XM_005220821.5"/>
</dbReference>
<dbReference type="RefSeq" id="XP_010814617.1">
    <property type="nucleotide sequence ID" value="XM_010816315.4"/>
</dbReference>
<dbReference type="RefSeq" id="XP_059733737.1">
    <property type="nucleotide sequence ID" value="XM_059877754.1"/>
</dbReference>
<dbReference type="RefSeq" id="XP_059733738.1">
    <property type="nucleotide sequence ID" value="XM_059877755.1"/>
</dbReference>
<dbReference type="SMR" id="P10897"/>
<dbReference type="FunCoup" id="P10897">
    <property type="interactions" value="95"/>
</dbReference>
<dbReference type="STRING" id="9913.ENSBTAP00000027732"/>
<dbReference type="TCDB" id="5.B.2.1.1">
    <property type="family name" value="the eukaryotic cytochrome b561 (cytb561) family"/>
</dbReference>
<dbReference type="iPTMnet" id="P10897"/>
<dbReference type="PaxDb" id="9913-ENSBTAP00000027732"/>
<dbReference type="GeneID" id="317663"/>
<dbReference type="KEGG" id="bta:317663"/>
<dbReference type="CTD" id="1534"/>
<dbReference type="VEuPathDB" id="HostDB:ENSBTAG00000020810"/>
<dbReference type="eggNOG" id="KOG1619">
    <property type="taxonomic scope" value="Eukaryota"/>
</dbReference>
<dbReference type="HOGENOM" id="CLU_069712_1_1_1"/>
<dbReference type="InParanoid" id="P10897"/>
<dbReference type="OrthoDB" id="907479at2759"/>
<dbReference type="TreeFam" id="TF314222"/>
<dbReference type="BRENDA" id="7.2.1.3">
    <property type="organism ID" value="908"/>
</dbReference>
<dbReference type="Proteomes" id="UP000009136">
    <property type="component" value="Chromosome 19"/>
</dbReference>
<dbReference type="Bgee" id="ENSBTAG00000020810">
    <property type="expression patterns" value="Expressed in saliva-secreting gland and 97 other cell types or tissues"/>
</dbReference>
<dbReference type="GO" id="GO:0042584">
    <property type="term" value="C:chromaffin granule membrane"/>
    <property type="evidence" value="ECO:0000314"/>
    <property type="project" value="UniProtKB"/>
</dbReference>
<dbReference type="GO" id="GO:0005765">
    <property type="term" value="C:lysosomal membrane"/>
    <property type="evidence" value="ECO:0000318"/>
    <property type="project" value="GO_Central"/>
</dbReference>
<dbReference type="GO" id="GO:0046872">
    <property type="term" value="F:metal ion binding"/>
    <property type="evidence" value="ECO:0007669"/>
    <property type="project" value="UniProtKB-KW"/>
</dbReference>
<dbReference type="GO" id="GO:0016491">
    <property type="term" value="F:oxidoreductase activity"/>
    <property type="evidence" value="ECO:0000318"/>
    <property type="project" value="GO_Central"/>
</dbReference>
<dbReference type="GO" id="GO:0140575">
    <property type="term" value="F:transmembrane monodehydroascorbate reductase activity"/>
    <property type="evidence" value="ECO:0000314"/>
    <property type="project" value="UniProtKB"/>
</dbReference>
<dbReference type="GO" id="GO:0140576">
    <property type="term" value="P:ascorbate homeostasis"/>
    <property type="evidence" value="ECO:0000314"/>
    <property type="project" value="UniProtKB"/>
</dbReference>
<dbReference type="FunFam" id="1.20.120.1770:FF:000001">
    <property type="entry name" value="Cytochrome b reductase 1"/>
    <property type="match status" value="1"/>
</dbReference>
<dbReference type="Gene3D" id="1.20.120.1770">
    <property type="match status" value="1"/>
</dbReference>
<dbReference type="InterPro" id="IPR043205">
    <property type="entry name" value="CYB561/CYBRD1-like"/>
</dbReference>
<dbReference type="InterPro" id="IPR006593">
    <property type="entry name" value="Cyt_b561/ferric_Rdtase_TM"/>
</dbReference>
<dbReference type="PANTHER" id="PTHR10106">
    <property type="entry name" value="CYTOCHROME B561-RELATED"/>
    <property type="match status" value="1"/>
</dbReference>
<dbReference type="PANTHER" id="PTHR10106:SF14">
    <property type="entry name" value="TRANSMEMBRANE ASCORBATE-DEPENDENT REDUCTASE CYB561"/>
    <property type="match status" value="1"/>
</dbReference>
<dbReference type="Pfam" id="PF03188">
    <property type="entry name" value="Cytochrom_B561"/>
    <property type="match status" value="1"/>
</dbReference>
<dbReference type="SMART" id="SM00665">
    <property type="entry name" value="B561"/>
    <property type="match status" value="1"/>
</dbReference>
<dbReference type="PROSITE" id="PS50939">
    <property type="entry name" value="CYTOCHROME_B561"/>
    <property type="match status" value="1"/>
</dbReference>
<proteinExistence type="evidence at protein level"/>
<evidence type="ECO:0000250" key="1">
    <source>
        <dbReference type="UniProtKB" id="Q53TN4"/>
    </source>
</evidence>
<evidence type="ECO:0000250" key="2">
    <source>
        <dbReference type="UniProtKB" id="Q60720"/>
    </source>
</evidence>
<evidence type="ECO:0000255" key="3"/>
<evidence type="ECO:0000255" key="4">
    <source>
        <dbReference type="PROSITE-ProRule" id="PRU00242"/>
    </source>
</evidence>
<evidence type="ECO:0000269" key="5">
    <source>
    </source>
</evidence>
<evidence type="ECO:0000269" key="6">
    <source>
    </source>
</evidence>
<evidence type="ECO:0000269" key="7">
    <source>
    </source>
</evidence>
<evidence type="ECO:0000269" key="8">
    <source>
    </source>
</evidence>
<evidence type="ECO:0000269" key="9">
    <source>
    </source>
</evidence>
<evidence type="ECO:0000269" key="10">
    <source>
    </source>
</evidence>
<evidence type="ECO:0000303" key="11">
    <source>
    </source>
</evidence>
<evidence type="ECO:0000303" key="12">
    <source>
    </source>
</evidence>
<evidence type="ECO:0000305" key="13"/>
<evidence type="ECO:0000305" key="14">
    <source>
    </source>
</evidence>
<evidence type="ECO:0000305" key="15">
    <source>
    </source>
</evidence>
<evidence type="ECO:0000305" key="16">
    <source>
    </source>
</evidence>
<evidence type="ECO:0000305" key="17">
    <source>
    </source>
</evidence>
<organism>
    <name type="scientific">Bos taurus</name>
    <name type="common">Bovine</name>
    <dbReference type="NCBI Taxonomy" id="9913"/>
    <lineage>
        <taxon>Eukaryota</taxon>
        <taxon>Metazoa</taxon>
        <taxon>Chordata</taxon>
        <taxon>Craniata</taxon>
        <taxon>Vertebrata</taxon>
        <taxon>Euteleostomi</taxon>
        <taxon>Mammalia</taxon>
        <taxon>Eutheria</taxon>
        <taxon>Laurasiatheria</taxon>
        <taxon>Artiodactyla</taxon>
        <taxon>Ruminantia</taxon>
        <taxon>Pecora</taxon>
        <taxon>Bovidae</taxon>
        <taxon>Bovinae</taxon>
        <taxon>Bos</taxon>
    </lineage>
</organism>
<comment type="function">
    <text evidence="6 7 9 16">Transmembrane reductase that uses ascorbate as an electron donor in the cytoplasm and transfers electrons across membranes to reduce monodehydro-L-ascorbate radical in the lumen of secretory vesicles (PubMed:1623014, PubMed:18501187, PubMed:3597367). It is therefore involved the regeneration and homeostasis within secretory vesicles of ascorbate which in turn provides reducing equivalents needed to support the activity of intravesicular enzymes (Probable).</text>
</comment>
<comment type="catalytic activity">
    <reaction evidence="6 7 9">
        <text>monodehydro-L-ascorbate radical(out) + L-ascorbate(in) = monodehydro-L-ascorbate radical(in) + L-ascorbate(out)</text>
        <dbReference type="Rhea" id="RHEA:66524"/>
        <dbReference type="ChEBI" id="CHEBI:38290"/>
        <dbReference type="ChEBI" id="CHEBI:59513"/>
    </reaction>
    <physiologicalReaction direction="left-to-right" evidence="14">
        <dbReference type="Rhea" id="RHEA:66525"/>
    </physiologicalReaction>
</comment>
<comment type="cofactor">
    <cofactor evidence="7 10">
        <name>heme b</name>
        <dbReference type="ChEBI" id="CHEBI:60344"/>
    </cofactor>
    <text evidence="15 17">Binds 2 heme b groups non-covalently.</text>
</comment>
<comment type="subcellular location">
    <subcellularLocation>
        <location evidence="8">Cytoplasmic vesicle</location>
        <location evidence="8">Secretory vesicle</location>
        <location evidence="8">Chromaffin granule membrane</location>
        <topology evidence="1">Multi-pass membrane protein</topology>
    </subcellularLocation>
    <text evidence="8">Secretory vesicle containing catecholamines and amidated peptides.</text>
</comment>
<comment type="tissue specificity">
    <text evidence="8">Expressed in the adrenal medulla and all brain regions, but not in visceral organs.</text>
</comment>
<comment type="sequence caution" evidence="13">
    <conflict type="erroneous initiation">
        <sequence resource="EMBL-CDS" id="CAA31274"/>
    </conflict>
    <text>Extended N-terminus.</text>
</comment>
<reference key="1">
    <citation type="journal article" date="1988" name="EMBO J.">
        <title>The structure of cytochrome b561, a secretory vesicle-specific electron transport protein.</title>
        <authorList>
            <person name="Perin M.S."/>
            <person name="Fried V.A."/>
            <person name="Slaughter C.A."/>
            <person name="Suedhof T.C."/>
        </authorList>
    </citation>
    <scope>NUCLEOTIDE SEQUENCE [MRNA]</scope>
    <scope>PARTIAL PROTEIN SEQUENCE</scope>
    <scope>TISSUE SPECIFICITY</scope>
    <scope>SUBCELLULAR LOCATION</scope>
    <source>
        <tissue>Adrenal chromaffin</tissue>
    </source>
</reference>
<reference key="2">
    <citation type="submission" date="2006-08" db="EMBL/GenBank/DDBJ databases">
        <authorList>
            <consortium name="NIH - Mammalian Gene Collection (MGC) project"/>
        </authorList>
    </citation>
    <scope>NUCLEOTIDE SEQUENCE [LARGE SCALE MRNA]</scope>
    <source>
        <strain>Hereford</strain>
        <tissue>Fetal pons</tissue>
    </source>
</reference>
<reference key="3">
    <citation type="journal article" date="2003" name="Protoplasma">
        <title>Cytochrome b561 is not fatty acylated but acetylated at amino terminus in chromaffin vesicle membranes: an approach for the identification of posttranslational modification of transmembrane proteins.</title>
        <authorList>
            <person name="Nakamura M."/>
            <person name="Takeuchi F."/>
            <person name="Tsubaki M."/>
        </authorList>
    </citation>
    <scope>PROTEIN SEQUENCE OF 2-9</scope>
    <scope>ACETYLATION AT MET-1</scope>
    <source>
        <tissue>Adrenal chromaffin</tissue>
    </source>
</reference>
<reference key="4">
    <citation type="journal article" date="1980" name="Neuroscience">
        <title>Cytochrome b561 is identical with chromomembrin B, a major polypeptide of chromaffin granule membranes.</title>
        <authorList>
            <person name="Apps D.K."/>
            <person name="Pryde J.G."/>
            <person name="Phillips J.H."/>
        </authorList>
    </citation>
    <scope>IDENTIFICATION</scope>
</reference>
<reference key="5">
    <citation type="journal article" date="1987" name="J. Biol. Chem.">
        <title>Purified cytochrome b561 catalyzes transmembrane electron transfer for dopamine beta-hydroxylase and peptidyl glycine alpha-amidating monooxygenase activities in reconstituted systems.</title>
        <authorList>
            <person name="Kent U.M."/>
            <person name="Fleming P.J."/>
        </authorList>
    </citation>
    <scope>FUNCTION</scope>
    <scope>CATALYTIC ACTIVITY</scope>
</reference>
<reference key="6">
    <citation type="journal article" date="1992" name="Biochim. Biophys. Acta">
        <title>Electron transfer in chromaffin-vesicle ghosts containing peroxidase.</title>
        <authorList>
            <person name="Harnadek G.J."/>
            <person name="Ries E.A."/>
            <person name="Tse D.G."/>
            <person name="Fitz J.S."/>
            <person name="Njus D."/>
        </authorList>
    </citation>
    <scope>FUNCTION</scope>
    <scope>CATALYTIC ACTIVITY</scope>
</reference>
<reference key="7">
    <citation type="journal article" date="1997" name="J. Biol. Chem.">
        <title>Existence of two heme B centers in cytochrome b561 from bovine adrenal chromaffin vesicles as revealed by a new purification procedure and EPR spectroscopy.</title>
        <authorList>
            <person name="Tsubaki M."/>
            <person name="Nakayama M."/>
            <person name="Okuyama E."/>
            <person name="Ichikawa Y."/>
            <person name="Hori H."/>
        </authorList>
    </citation>
    <scope>COFACTOR</scope>
</reference>
<reference key="8">
    <citation type="journal article" date="2008" name="Biochim. Biophys. Acta">
        <title>His92 and His110 selectively affect different heme centers of adrenal cytochrome b(561).</title>
        <authorList>
            <person name="Liu W."/>
            <person name="Rogge C.E."/>
            <person name="da Silva G.F."/>
            <person name="Shinkarev V.P."/>
            <person name="Tsai A.L."/>
            <person name="Kamensky Y."/>
            <person name="Palmer G."/>
            <person name="Kulmacz R.J."/>
        </authorList>
    </citation>
    <scope>FUNCTION</scope>
    <scope>CATALYTIC ACTIVITY</scope>
    <scope>COFACTOR</scope>
    <scope>MUTAGENESIS OF HIS-54; ASN-78; HIS-88; HIS-92; HIS-109; HIS-110; HIS-122 AND HIS-161</scope>
</reference>
<name>CY561_BOVIN</name>
<sequence>MEGPASPARAPGALPYYVAFSQLLGLIVVAMTGAWLGMYRGGIAWESALQFNVHPLCMIIGLVFLQGDALLVYRVFRNEAKRTTKVLHGLLHVFAFVIALVGLVAVFEHHRKKGYADLYSLHSWCGILVFALFFAQWLVGFSFFLFPGASFSLRSRYRPQHVFFGAAIFLLSVATALLGLKEALLFELGTKYSMFEPEGVLANVLGLLLATFATVILYILTRADWKRPLQAEEQALSMDFKTLTEGDSPSSQ</sequence>
<protein>
    <recommendedName>
        <fullName evidence="14">Transmembrane ascorbate-dependent reductase CYB561</fullName>
        <ecNumber evidence="6 9">7.2.1.-</ecNumber>
    </recommendedName>
    <alternativeName>
        <fullName evidence="12">Chromomembrin B</fullName>
    </alternativeName>
    <alternativeName>
        <fullName>Cytochrome b-561</fullName>
    </alternativeName>
    <alternativeName>
        <fullName evidence="11">Cytochrome b561</fullName>
    </alternativeName>
</protein>
<gene>
    <name type="primary">CYB561</name>
</gene>